<reference key="1">
    <citation type="submission" date="2006-12" db="EMBL/GenBank/DDBJ databases">
        <title>Complete sequence of Mycobacterium vanbaalenii PYR-1.</title>
        <authorList>
            <consortium name="US DOE Joint Genome Institute"/>
            <person name="Copeland A."/>
            <person name="Lucas S."/>
            <person name="Lapidus A."/>
            <person name="Barry K."/>
            <person name="Detter J.C."/>
            <person name="Glavina del Rio T."/>
            <person name="Hammon N."/>
            <person name="Israni S."/>
            <person name="Dalin E."/>
            <person name="Tice H."/>
            <person name="Pitluck S."/>
            <person name="Singan V."/>
            <person name="Schmutz J."/>
            <person name="Larimer F."/>
            <person name="Land M."/>
            <person name="Hauser L."/>
            <person name="Kyrpides N."/>
            <person name="Anderson I.J."/>
            <person name="Miller C."/>
            <person name="Richardson P."/>
        </authorList>
    </citation>
    <scope>NUCLEOTIDE SEQUENCE [LARGE SCALE GENOMIC DNA]</scope>
    <source>
        <strain>DSM 7251 / JCM 13017 / BCRC 16820 / KCTC 9966 / NRRL B-24157 / PYR-1</strain>
    </source>
</reference>
<comment type="function">
    <text evidence="1">One of the primary rRNA binding proteins, it binds directly to 16S rRNA where it helps nucleate assembly of the platform of the 30S subunit by binding and bridging several RNA helices of the 16S rRNA.</text>
</comment>
<comment type="function">
    <text evidence="1">Forms an intersubunit bridge (bridge B4) with the 23S rRNA of the 50S subunit in the ribosome.</text>
</comment>
<comment type="subunit">
    <text evidence="1">Part of the 30S ribosomal subunit. Forms a bridge to the 50S subunit in the 70S ribosome, contacting the 23S rRNA.</text>
</comment>
<comment type="similarity">
    <text evidence="1">Belongs to the universal ribosomal protein uS15 family.</text>
</comment>
<organism>
    <name type="scientific">Mycolicibacterium vanbaalenii (strain DSM 7251 / JCM 13017 / BCRC 16820 / KCTC 9966 / NRRL B-24157 / PYR-1)</name>
    <name type="common">Mycobacterium vanbaalenii</name>
    <dbReference type="NCBI Taxonomy" id="350058"/>
    <lineage>
        <taxon>Bacteria</taxon>
        <taxon>Bacillati</taxon>
        <taxon>Actinomycetota</taxon>
        <taxon>Actinomycetes</taxon>
        <taxon>Mycobacteriales</taxon>
        <taxon>Mycobacteriaceae</taxon>
        <taxon>Mycolicibacterium</taxon>
    </lineage>
</organism>
<gene>
    <name evidence="1" type="primary">rpsO</name>
    <name type="ordered locus">Mvan_2349</name>
</gene>
<dbReference type="EMBL" id="CP000511">
    <property type="protein sequence ID" value="ABM13163.1"/>
    <property type="molecule type" value="Genomic_DNA"/>
</dbReference>
<dbReference type="RefSeq" id="WP_011779575.1">
    <property type="nucleotide sequence ID" value="NZ_JACKSD010000088.1"/>
</dbReference>
<dbReference type="SMR" id="A1T7L3"/>
<dbReference type="STRING" id="350058.Mvan_2349"/>
<dbReference type="KEGG" id="mva:Mvan_2349"/>
<dbReference type="eggNOG" id="COG0184">
    <property type="taxonomic scope" value="Bacteria"/>
</dbReference>
<dbReference type="HOGENOM" id="CLU_148518_0_0_11"/>
<dbReference type="Proteomes" id="UP000009159">
    <property type="component" value="Chromosome"/>
</dbReference>
<dbReference type="GO" id="GO:0022627">
    <property type="term" value="C:cytosolic small ribosomal subunit"/>
    <property type="evidence" value="ECO:0007669"/>
    <property type="project" value="TreeGrafter"/>
</dbReference>
<dbReference type="GO" id="GO:0019843">
    <property type="term" value="F:rRNA binding"/>
    <property type="evidence" value="ECO:0007669"/>
    <property type="project" value="UniProtKB-UniRule"/>
</dbReference>
<dbReference type="GO" id="GO:0003735">
    <property type="term" value="F:structural constituent of ribosome"/>
    <property type="evidence" value="ECO:0007669"/>
    <property type="project" value="InterPro"/>
</dbReference>
<dbReference type="GO" id="GO:0006412">
    <property type="term" value="P:translation"/>
    <property type="evidence" value="ECO:0007669"/>
    <property type="project" value="UniProtKB-UniRule"/>
</dbReference>
<dbReference type="CDD" id="cd00353">
    <property type="entry name" value="Ribosomal_S15p_S13e"/>
    <property type="match status" value="1"/>
</dbReference>
<dbReference type="FunFam" id="1.10.287.10:FF:000002">
    <property type="entry name" value="30S ribosomal protein S15"/>
    <property type="match status" value="1"/>
</dbReference>
<dbReference type="Gene3D" id="6.10.250.3130">
    <property type="match status" value="1"/>
</dbReference>
<dbReference type="Gene3D" id="1.10.287.10">
    <property type="entry name" value="S15/NS1, RNA-binding"/>
    <property type="match status" value="1"/>
</dbReference>
<dbReference type="HAMAP" id="MF_01343_B">
    <property type="entry name" value="Ribosomal_uS15_B"/>
    <property type="match status" value="1"/>
</dbReference>
<dbReference type="InterPro" id="IPR000589">
    <property type="entry name" value="Ribosomal_uS15"/>
</dbReference>
<dbReference type="InterPro" id="IPR005290">
    <property type="entry name" value="Ribosomal_uS15_bac-type"/>
</dbReference>
<dbReference type="InterPro" id="IPR009068">
    <property type="entry name" value="uS15_NS1_RNA-bd_sf"/>
</dbReference>
<dbReference type="NCBIfam" id="TIGR00952">
    <property type="entry name" value="S15_bact"/>
    <property type="match status" value="1"/>
</dbReference>
<dbReference type="PANTHER" id="PTHR23321">
    <property type="entry name" value="RIBOSOMAL PROTEIN S15, BACTERIAL AND ORGANELLAR"/>
    <property type="match status" value="1"/>
</dbReference>
<dbReference type="PANTHER" id="PTHR23321:SF26">
    <property type="entry name" value="SMALL RIBOSOMAL SUBUNIT PROTEIN US15M"/>
    <property type="match status" value="1"/>
</dbReference>
<dbReference type="Pfam" id="PF00312">
    <property type="entry name" value="Ribosomal_S15"/>
    <property type="match status" value="1"/>
</dbReference>
<dbReference type="SMART" id="SM01387">
    <property type="entry name" value="Ribosomal_S15"/>
    <property type="match status" value="1"/>
</dbReference>
<dbReference type="SUPFAM" id="SSF47060">
    <property type="entry name" value="S15/NS1 RNA-binding domain"/>
    <property type="match status" value="1"/>
</dbReference>
<dbReference type="PROSITE" id="PS00362">
    <property type="entry name" value="RIBOSOMAL_S15"/>
    <property type="match status" value="1"/>
</dbReference>
<protein>
    <recommendedName>
        <fullName evidence="1">Small ribosomal subunit protein uS15</fullName>
    </recommendedName>
    <alternativeName>
        <fullName evidence="2">30S ribosomal protein S15</fullName>
    </alternativeName>
</protein>
<evidence type="ECO:0000255" key="1">
    <source>
        <dbReference type="HAMAP-Rule" id="MF_01343"/>
    </source>
</evidence>
<evidence type="ECO:0000305" key="2"/>
<sequence length="89" mass="10402">MALTAEQKKEILGQYGLHDTDTGSPEAQVALLTKRIVDLTEHLKQHKHDHHSRRGLLLLVGRRRRLLKYVAQVDVERYRSLIERLGLRR</sequence>
<name>RS15_MYCVP</name>
<accession>A1T7L3</accession>
<proteinExistence type="inferred from homology"/>
<feature type="chain" id="PRO_1000054825" description="Small ribosomal subunit protein uS15">
    <location>
        <begin position="1"/>
        <end position="89"/>
    </location>
</feature>
<keyword id="KW-0687">Ribonucleoprotein</keyword>
<keyword id="KW-0689">Ribosomal protein</keyword>
<keyword id="KW-0694">RNA-binding</keyword>
<keyword id="KW-0699">rRNA-binding</keyword>